<name>RM47_BOVIN</name>
<sequence>MAAASLAVFCRRVSAALKASTSLISSQTLASTGCRFSLSLLTKNTPNVTSFHQCRLLQTTLSRRGLEEFFDDPKNWGEEKVKSGASWTCQQLRNKSNEDLHKLWYVLLKERNMLLTLEQEAKRQRLPMPSPERLEKVVDSMDALDKVVQEREDALRLLQTGQEKPRPGAWRRDIFGRIIWHKFKQWPIPWYLNKRYNRKRFFAMPYVERFVRLRIEKQARIKARKISLTQKKEKFLQKKFPHLSEAQKSSAA</sequence>
<reference key="1">
    <citation type="submission" date="2006-09" db="EMBL/GenBank/DDBJ databases">
        <authorList>
            <consortium name="NIH - Mammalian Gene Collection (MGC) project"/>
        </authorList>
    </citation>
    <scope>NUCLEOTIDE SEQUENCE [LARGE SCALE MRNA]</scope>
    <source>
        <strain>Hereford</strain>
        <tissue>Fetal brain</tissue>
    </source>
</reference>
<accession>Q08DT6</accession>
<proteinExistence type="evidence at transcript level"/>
<gene>
    <name type="primary">MRPL47</name>
</gene>
<organism>
    <name type="scientific">Bos taurus</name>
    <name type="common">Bovine</name>
    <dbReference type="NCBI Taxonomy" id="9913"/>
    <lineage>
        <taxon>Eukaryota</taxon>
        <taxon>Metazoa</taxon>
        <taxon>Chordata</taxon>
        <taxon>Craniata</taxon>
        <taxon>Vertebrata</taxon>
        <taxon>Euteleostomi</taxon>
        <taxon>Mammalia</taxon>
        <taxon>Eutheria</taxon>
        <taxon>Laurasiatheria</taxon>
        <taxon>Artiodactyla</taxon>
        <taxon>Ruminantia</taxon>
        <taxon>Pecora</taxon>
        <taxon>Bovidae</taxon>
        <taxon>Bovinae</taxon>
        <taxon>Bos</taxon>
    </lineage>
</organism>
<keyword id="KW-0007">Acetylation</keyword>
<keyword id="KW-0496">Mitochondrion</keyword>
<keyword id="KW-1185">Reference proteome</keyword>
<keyword id="KW-0687">Ribonucleoprotein</keyword>
<keyword id="KW-0689">Ribosomal protein</keyword>
<keyword id="KW-0809">Transit peptide</keyword>
<dbReference type="EMBL" id="BC123572">
    <property type="protein sequence ID" value="AAI23573.1"/>
    <property type="molecule type" value="mRNA"/>
</dbReference>
<dbReference type="RefSeq" id="NP_001070369.1">
    <property type="nucleotide sequence ID" value="NM_001076901.1"/>
</dbReference>
<dbReference type="SMR" id="Q08DT6"/>
<dbReference type="FunCoup" id="Q08DT6">
    <property type="interactions" value="1956"/>
</dbReference>
<dbReference type="STRING" id="9913.ENSBTAP00000003195"/>
<dbReference type="PaxDb" id="9913-ENSBTAP00000003195"/>
<dbReference type="GeneID" id="534317"/>
<dbReference type="KEGG" id="bta:534317"/>
<dbReference type="CTD" id="57129"/>
<dbReference type="eggNOG" id="KOG3331">
    <property type="taxonomic scope" value="Eukaryota"/>
</dbReference>
<dbReference type="InParanoid" id="Q08DT6"/>
<dbReference type="OrthoDB" id="270763at2759"/>
<dbReference type="Proteomes" id="UP000009136">
    <property type="component" value="Unplaced"/>
</dbReference>
<dbReference type="GO" id="GO:0005743">
    <property type="term" value="C:mitochondrial inner membrane"/>
    <property type="evidence" value="ECO:0000304"/>
    <property type="project" value="Reactome"/>
</dbReference>
<dbReference type="GO" id="GO:0005762">
    <property type="term" value="C:mitochondrial large ribosomal subunit"/>
    <property type="evidence" value="ECO:0000250"/>
    <property type="project" value="UniProtKB"/>
</dbReference>
<dbReference type="GO" id="GO:0003735">
    <property type="term" value="F:structural constituent of ribosome"/>
    <property type="evidence" value="ECO:0000318"/>
    <property type="project" value="GO_Central"/>
</dbReference>
<dbReference type="GO" id="GO:0032543">
    <property type="term" value="P:mitochondrial translation"/>
    <property type="evidence" value="ECO:0000318"/>
    <property type="project" value="GO_Central"/>
</dbReference>
<dbReference type="Gene3D" id="6.10.330.20">
    <property type="match status" value="1"/>
</dbReference>
<dbReference type="InterPro" id="IPR038340">
    <property type="entry name" value="MRP-L47_sf"/>
</dbReference>
<dbReference type="InterPro" id="IPR010729">
    <property type="entry name" value="Ribosomal_uL29_mit"/>
</dbReference>
<dbReference type="PANTHER" id="PTHR21183:SF18">
    <property type="entry name" value="LARGE RIBOSOMAL SUBUNIT PROTEIN UL29M"/>
    <property type="match status" value="1"/>
</dbReference>
<dbReference type="PANTHER" id="PTHR21183">
    <property type="entry name" value="RIBOSOMAL PROTEIN L47, MITOCHONDRIAL-RELATED"/>
    <property type="match status" value="1"/>
</dbReference>
<dbReference type="Pfam" id="PF06984">
    <property type="entry name" value="MRP-L47"/>
    <property type="match status" value="1"/>
</dbReference>
<protein>
    <recommendedName>
        <fullName evidence="3">Large ribosomal subunit protein uL29m</fullName>
    </recommendedName>
    <alternativeName>
        <fullName>39S ribosomal protein L47, mitochondrial</fullName>
        <shortName>L47mt</shortName>
        <shortName>MRP-L47</shortName>
    </alternativeName>
</protein>
<comment type="subunit">
    <text evidence="1">Component of the mitochondrial ribosome large subunit (39S) which comprises a 16S rRNA and about 50 distinct proteins.</text>
</comment>
<comment type="subcellular location">
    <subcellularLocation>
        <location evidence="1">Mitochondrion</location>
    </subcellularLocation>
</comment>
<comment type="similarity">
    <text evidence="3">Belongs to the universal ribosomal protein uL29 family.</text>
</comment>
<feature type="transit peptide" description="Mitochondrion" evidence="2">
    <location>
        <begin position="1"/>
        <end status="unknown"/>
    </location>
</feature>
<feature type="chain" id="PRO_0000283811" description="Large ribosomal subunit protein uL29m">
    <location>
        <begin status="unknown"/>
        <end position="252"/>
    </location>
</feature>
<feature type="modified residue" description="N6-acetyllysine" evidence="1">
    <location>
        <position position="146"/>
    </location>
</feature>
<evidence type="ECO:0000250" key="1">
    <source>
        <dbReference type="UniProtKB" id="Q9HD33"/>
    </source>
</evidence>
<evidence type="ECO:0000255" key="2"/>
<evidence type="ECO:0000305" key="3"/>